<gene>
    <name evidence="1" type="primary">rimM</name>
    <name type="ordered locus">mma_0592</name>
</gene>
<protein>
    <recommendedName>
        <fullName evidence="1">Ribosome maturation factor RimM</fullName>
    </recommendedName>
</protein>
<dbReference type="EMBL" id="CP000269">
    <property type="protein sequence ID" value="ABR89143.1"/>
    <property type="molecule type" value="Genomic_DNA"/>
</dbReference>
<dbReference type="RefSeq" id="WP_012078456.1">
    <property type="nucleotide sequence ID" value="NC_009659.1"/>
</dbReference>
<dbReference type="SMR" id="A6SVI5"/>
<dbReference type="STRING" id="375286.mma_0592"/>
<dbReference type="KEGG" id="mms:mma_0592"/>
<dbReference type="eggNOG" id="COG0806">
    <property type="taxonomic scope" value="Bacteria"/>
</dbReference>
<dbReference type="HOGENOM" id="CLU_077636_1_0_4"/>
<dbReference type="Proteomes" id="UP000006388">
    <property type="component" value="Chromosome"/>
</dbReference>
<dbReference type="GO" id="GO:0005737">
    <property type="term" value="C:cytoplasm"/>
    <property type="evidence" value="ECO:0007669"/>
    <property type="project" value="UniProtKB-SubCell"/>
</dbReference>
<dbReference type="GO" id="GO:0005840">
    <property type="term" value="C:ribosome"/>
    <property type="evidence" value="ECO:0007669"/>
    <property type="project" value="InterPro"/>
</dbReference>
<dbReference type="GO" id="GO:0043022">
    <property type="term" value="F:ribosome binding"/>
    <property type="evidence" value="ECO:0007669"/>
    <property type="project" value="InterPro"/>
</dbReference>
<dbReference type="GO" id="GO:0042274">
    <property type="term" value="P:ribosomal small subunit biogenesis"/>
    <property type="evidence" value="ECO:0007669"/>
    <property type="project" value="UniProtKB-UniRule"/>
</dbReference>
<dbReference type="GO" id="GO:0006364">
    <property type="term" value="P:rRNA processing"/>
    <property type="evidence" value="ECO:0007669"/>
    <property type="project" value="UniProtKB-UniRule"/>
</dbReference>
<dbReference type="Gene3D" id="2.30.30.240">
    <property type="entry name" value="PRC-barrel domain"/>
    <property type="match status" value="1"/>
</dbReference>
<dbReference type="Gene3D" id="2.40.30.60">
    <property type="entry name" value="RimM"/>
    <property type="match status" value="1"/>
</dbReference>
<dbReference type="HAMAP" id="MF_00014">
    <property type="entry name" value="Ribosome_mat_RimM"/>
    <property type="match status" value="1"/>
</dbReference>
<dbReference type="InterPro" id="IPR011033">
    <property type="entry name" value="PRC_barrel-like_sf"/>
</dbReference>
<dbReference type="InterPro" id="IPR056792">
    <property type="entry name" value="PRC_RimM"/>
</dbReference>
<dbReference type="InterPro" id="IPR011961">
    <property type="entry name" value="RimM"/>
</dbReference>
<dbReference type="InterPro" id="IPR002676">
    <property type="entry name" value="RimM_N"/>
</dbReference>
<dbReference type="InterPro" id="IPR036976">
    <property type="entry name" value="RimM_N_sf"/>
</dbReference>
<dbReference type="InterPro" id="IPR009000">
    <property type="entry name" value="Transl_B-barrel_sf"/>
</dbReference>
<dbReference type="NCBIfam" id="TIGR02273">
    <property type="entry name" value="16S_RimM"/>
    <property type="match status" value="1"/>
</dbReference>
<dbReference type="PANTHER" id="PTHR33692">
    <property type="entry name" value="RIBOSOME MATURATION FACTOR RIMM"/>
    <property type="match status" value="1"/>
</dbReference>
<dbReference type="PANTHER" id="PTHR33692:SF1">
    <property type="entry name" value="RIBOSOME MATURATION FACTOR RIMM"/>
    <property type="match status" value="1"/>
</dbReference>
<dbReference type="Pfam" id="PF24986">
    <property type="entry name" value="PRC_RimM"/>
    <property type="match status" value="1"/>
</dbReference>
<dbReference type="Pfam" id="PF01782">
    <property type="entry name" value="RimM"/>
    <property type="match status" value="1"/>
</dbReference>
<dbReference type="SUPFAM" id="SSF50346">
    <property type="entry name" value="PRC-barrel domain"/>
    <property type="match status" value="1"/>
</dbReference>
<dbReference type="SUPFAM" id="SSF50447">
    <property type="entry name" value="Translation proteins"/>
    <property type="match status" value="1"/>
</dbReference>
<keyword id="KW-0143">Chaperone</keyword>
<keyword id="KW-0963">Cytoplasm</keyword>
<keyword id="KW-0690">Ribosome biogenesis</keyword>
<keyword id="KW-0698">rRNA processing</keyword>
<reference key="1">
    <citation type="journal article" date="2007" name="PLoS Genet.">
        <title>Genome analysis of Minibacterium massiliensis highlights the convergent evolution of water-living bacteria.</title>
        <authorList>
            <person name="Audic S."/>
            <person name="Robert C."/>
            <person name="Campagna B."/>
            <person name="Parinello H."/>
            <person name="Claverie J.-M."/>
            <person name="Raoult D."/>
            <person name="Drancourt M."/>
        </authorList>
    </citation>
    <scope>NUCLEOTIDE SEQUENCE [LARGE SCALE GENOMIC DNA]</scope>
    <source>
        <strain>Marseille</strain>
    </source>
</reference>
<proteinExistence type="inferred from homology"/>
<name>RIMM_JANMA</name>
<evidence type="ECO:0000255" key="1">
    <source>
        <dbReference type="HAMAP-Rule" id="MF_00014"/>
    </source>
</evidence>
<feature type="chain" id="PRO_0000351766" description="Ribosome maturation factor RimM">
    <location>
        <begin position="1"/>
        <end position="179"/>
    </location>
</feature>
<feature type="domain" description="PRC barrel" evidence="1">
    <location>
        <begin position="96"/>
        <end position="179"/>
    </location>
</feature>
<accession>A6SVI5</accession>
<sequence>MKVPEDLVLVGYISGAYGLNGWVRVRPYSADADALLTAKTWWLDKPEFHDVEMMQSKIHTGDVVAKLMGVAGRDAAEALKGATVQIPRSHFPALSDNEFYWVDLIGLEVENLQGEHLGQVSDMMDNGAHPILRVAVPQAAETTDPKAAPQELLIPFVEQFVITVDRTAKKITVDWGLDY</sequence>
<comment type="function">
    <text evidence="1">An accessory protein needed during the final step in the assembly of 30S ribosomal subunit, possibly for assembly of the head region. Essential for efficient processing of 16S rRNA. May be needed both before and after RbfA during the maturation of 16S rRNA. It has affinity for free ribosomal 30S subunits but not for 70S ribosomes.</text>
</comment>
<comment type="subunit">
    <text evidence="1">Binds ribosomal protein uS19.</text>
</comment>
<comment type="subcellular location">
    <subcellularLocation>
        <location evidence="1">Cytoplasm</location>
    </subcellularLocation>
</comment>
<comment type="domain">
    <text evidence="1">The PRC barrel domain binds ribosomal protein uS19.</text>
</comment>
<comment type="similarity">
    <text evidence="1">Belongs to the RimM family.</text>
</comment>
<organism>
    <name type="scientific">Janthinobacterium sp. (strain Marseille)</name>
    <name type="common">Minibacterium massiliensis</name>
    <dbReference type="NCBI Taxonomy" id="375286"/>
    <lineage>
        <taxon>Bacteria</taxon>
        <taxon>Pseudomonadati</taxon>
        <taxon>Pseudomonadota</taxon>
        <taxon>Betaproteobacteria</taxon>
        <taxon>Burkholderiales</taxon>
        <taxon>Oxalobacteraceae</taxon>
        <taxon>Janthinobacterium</taxon>
    </lineage>
</organism>